<proteinExistence type="evidence at transcript level"/>
<accession>Q7SXP2</accession>
<accession>A7MBR8</accession>
<accession>Q7ZUA4</accession>
<sequence length="533" mass="60404">MTDPKTSKEQKYDRQLRLWGDHGQEALENAHVCLINATASGTEILKNLVLPGIGAFTIVDGHKVSGEDVGNNFFLSSSAIGKNRAQAATELLQELNSDVSGNFVEESPDKLLDNDCEFFHRFSLVIAVQLPESTCLRLGAVLWEAGVPFLVCRTYGLIGYMRLIVKEHTVVESHPDNALEDLRLDQPFTELKRHVESYDLDNMEKKDHSHTPWIIVVARYLEKWYNENNSQLPKNYKEKEAFRQLLREGILKNENGGLEDEENFEEAIKNVNTALNPTKISSGTQDIFNAEQCENITSQSSSFWVMAHGVRDFVQNEGNGNLPVRGSIPDMIADSDKFIKLQNVYRDKAMRDAAVVSKHVEMLLQSVGKTPESISEQEIKLFCKNAAFLRVVRCRSLADEYSVDTFNKDEITSCMDSPDSEMVLYLMLRSVDRFYQQHSRYPGVYNYQVEEDINKLKLCVNSLLQEYSLNVNVKDDYIHEFCRYGAAEPHTVAAFLGGSAAQEAIKIITHQFVPFNNTFLYNAMSQTSATFQL</sequence>
<feature type="chain" id="PRO_0000194955" description="NEDD8-activating enzyme E1 regulatory subunit">
    <location>
        <begin position="1"/>
        <end position="533"/>
    </location>
</feature>
<feature type="region of interest" description="Interaction with uba3" evidence="1">
    <location>
        <begin position="330"/>
        <end position="343"/>
    </location>
</feature>
<feature type="site" description="Interaction with uba3" evidence="1">
    <location>
        <position position="210"/>
    </location>
</feature>
<feature type="splice variant" id="VSP_016394" description="In isoform 2." evidence="3">
    <location>
        <begin position="259"/>
        <end position="332"/>
    </location>
</feature>
<feature type="sequence conflict" description="In Ref. 1; AAH55513." evidence="4" ref="1">
    <original>K</original>
    <variation>R</variation>
    <location>
        <position position="11"/>
    </location>
</feature>
<feature type="sequence conflict" description="In Ref. 1; AAH55513." evidence="4" ref="1">
    <original>R</original>
    <variation>G</variation>
    <location>
        <position position="137"/>
    </location>
</feature>
<feature type="sequence conflict" description="In Ref. 1; AAI51888." evidence="4" ref="1">
    <original>Y</original>
    <variation>H</variation>
    <location>
        <position position="225"/>
    </location>
</feature>
<feature type="sequence conflict" description="In Ref. 1; AAI51888." evidence="4" ref="1">
    <original>N</original>
    <variation>T</variation>
    <location>
        <position position="319"/>
    </location>
</feature>
<feature type="sequence conflict" description="In Ref. 1; AAI51888." evidence="4" ref="1">
    <original>E</original>
    <variation>G</variation>
    <location>
        <position position="488"/>
    </location>
</feature>
<organism>
    <name type="scientific">Danio rerio</name>
    <name type="common">Zebrafish</name>
    <name type="synonym">Brachydanio rerio</name>
    <dbReference type="NCBI Taxonomy" id="7955"/>
    <lineage>
        <taxon>Eukaryota</taxon>
        <taxon>Metazoa</taxon>
        <taxon>Chordata</taxon>
        <taxon>Craniata</taxon>
        <taxon>Vertebrata</taxon>
        <taxon>Euteleostomi</taxon>
        <taxon>Actinopterygii</taxon>
        <taxon>Neopterygii</taxon>
        <taxon>Teleostei</taxon>
        <taxon>Ostariophysi</taxon>
        <taxon>Cypriniformes</taxon>
        <taxon>Danionidae</taxon>
        <taxon>Danioninae</taxon>
        <taxon>Danio</taxon>
    </lineage>
</organism>
<name>ULA1_DANRE</name>
<keyword id="KW-0025">Alternative splicing</keyword>
<keyword id="KW-1185">Reference proteome</keyword>
<keyword id="KW-0833">Ubl conjugation pathway</keyword>
<comment type="function">
    <text evidence="2">Regulatory subunit of the dimeric uba3-nae1 E1 enzyme. E1 activates nedd8 by first adenylating its C-terminal glycine residue with ATP, thereafter linking this residue to the side chain of the catalytic cysteine, yielding a nedd8-uba3 thioester and free AMP. E1 finally transfers nedd8 to the catalytic cysteine of ube2m (By similarity). The covalent attachment of nedd8 to target proteins is known as 'neddylation' and the process is involved in the regulation of cell growth, viability and development.</text>
</comment>
<comment type="pathway">
    <text>Protein modification; protein neddylation.</text>
</comment>
<comment type="subunit">
    <text evidence="1">Heterodimer of uba3 and nae1. The complex binds nedd8 and ube2m (By similarity).</text>
</comment>
<comment type="alternative products">
    <event type="alternative splicing"/>
    <isoform>
        <id>Q7SXP2-1</id>
        <name>1</name>
        <sequence type="displayed"/>
    </isoform>
    <isoform>
        <id>Q7SXP2-2</id>
        <name>2</name>
        <sequence type="described" ref="VSP_016394"/>
    </isoform>
</comment>
<comment type="similarity">
    <text evidence="4">Belongs to the ubiquitin-activating E1 family. ULA1 subfamily.</text>
</comment>
<comment type="sequence caution" evidence="4">
    <conflict type="erroneous initiation">
        <sequence resource="EMBL-CDS" id="AAH50171"/>
    </conflict>
</comment>
<gene>
    <name type="primary">nae1</name>
    <name type="synonym">appbp1</name>
</gene>
<protein>
    <recommendedName>
        <fullName>NEDD8-activating enzyme E1 regulatory subunit</fullName>
    </recommendedName>
    <alternativeName>
        <fullName>APP-BP1</fullName>
    </alternativeName>
    <alternativeName>
        <fullName>Amyloid protein-binding protein 1</fullName>
    </alternativeName>
</protein>
<dbReference type="EMBL" id="BC050171">
    <property type="protein sequence ID" value="AAH50171.1"/>
    <property type="status" value="ALT_INIT"/>
    <property type="molecule type" value="mRNA"/>
</dbReference>
<dbReference type="EMBL" id="BC055513">
    <property type="protein sequence ID" value="AAH55513.1"/>
    <property type="molecule type" value="mRNA"/>
</dbReference>
<dbReference type="EMBL" id="BC151887">
    <property type="protein sequence ID" value="AAI51888.1"/>
    <property type="molecule type" value="mRNA"/>
</dbReference>
<dbReference type="RefSeq" id="NP_956793.1">
    <property type="nucleotide sequence ID" value="NM_200499.1"/>
</dbReference>
<dbReference type="SMR" id="Q7SXP2"/>
<dbReference type="FunCoup" id="Q7SXP2">
    <property type="interactions" value="2650"/>
</dbReference>
<dbReference type="STRING" id="7955.ENSDARP00000026192"/>
<dbReference type="PaxDb" id="7955-ENSDARP00000026192"/>
<dbReference type="GeneID" id="573336"/>
<dbReference type="KEGG" id="dre:573336"/>
<dbReference type="AGR" id="ZFIN:ZDB-GENE-040426-1552"/>
<dbReference type="CTD" id="8883"/>
<dbReference type="ZFIN" id="ZDB-GENE-040426-1552">
    <property type="gene designation" value="nae1"/>
</dbReference>
<dbReference type="eggNOG" id="KOG2016">
    <property type="taxonomic scope" value="Eukaryota"/>
</dbReference>
<dbReference type="InParanoid" id="Q7SXP2"/>
<dbReference type="OrthoDB" id="1708823at2759"/>
<dbReference type="PhylomeDB" id="Q7SXP2"/>
<dbReference type="Reactome" id="R-DRE-8951664">
    <property type="pathway name" value="Neddylation"/>
</dbReference>
<dbReference type="UniPathway" id="UPA00885"/>
<dbReference type="PRO" id="PR:Q7SXP2"/>
<dbReference type="Proteomes" id="UP000000437">
    <property type="component" value="Alternate scaffold 7"/>
</dbReference>
<dbReference type="Proteomes" id="UP000000437">
    <property type="component" value="Chromosome 7"/>
</dbReference>
<dbReference type="GO" id="GO:0019781">
    <property type="term" value="F:NEDD8 activating enzyme activity"/>
    <property type="evidence" value="ECO:0007669"/>
    <property type="project" value="InterPro"/>
</dbReference>
<dbReference type="GO" id="GO:0045116">
    <property type="term" value="P:protein neddylation"/>
    <property type="evidence" value="ECO:0000250"/>
    <property type="project" value="UniProtKB"/>
</dbReference>
<dbReference type="CDD" id="cd01493">
    <property type="entry name" value="APPBP1_RUB"/>
    <property type="match status" value="1"/>
</dbReference>
<dbReference type="FunFam" id="3.40.50.720:FF:000174">
    <property type="entry name" value="NEDD8-activating enzyme E1 regulatory subunit"/>
    <property type="match status" value="1"/>
</dbReference>
<dbReference type="FunFam" id="3.40.50.720:FF:000187">
    <property type="entry name" value="NEDD8-activating enzyme E1 regulatory subunit"/>
    <property type="match status" value="1"/>
</dbReference>
<dbReference type="Gene3D" id="3.40.50.720">
    <property type="entry name" value="NAD(P)-binding Rossmann-like Domain"/>
    <property type="match status" value="2"/>
</dbReference>
<dbReference type="InterPro" id="IPR030667">
    <property type="entry name" value="APP-BP1"/>
</dbReference>
<dbReference type="InterPro" id="IPR045886">
    <property type="entry name" value="ThiF/MoeB/HesA"/>
</dbReference>
<dbReference type="InterPro" id="IPR000594">
    <property type="entry name" value="ThiF_NAD_FAD-bd"/>
</dbReference>
<dbReference type="InterPro" id="IPR035985">
    <property type="entry name" value="Ubiquitin-activating_enz"/>
</dbReference>
<dbReference type="PANTHER" id="PTHR10953:SF29">
    <property type="entry name" value="NEDD8-ACTIVATING ENZYME E1 REGULATORY SUBUNIT"/>
    <property type="match status" value="1"/>
</dbReference>
<dbReference type="PANTHER" id="PTHR10953">
    <property type="entry name" value="UBIQUITIN-ACTIVATING ENZYME E1"/>
    <property type="match status" value="1"/>
</dbReference>
<dbReference type="Pfam" id="PF00899">
    <property type="entry name" value="ThiF"/>
    <property type="match status" value="1"/>
</dbReference>
<dbReference type="PIRSF" id="PIRSF039099">
    <property type="entry name" value="APP-BP1"/>
    <property type="match status" value="1"/>
</dbReference>
<dbReference type="SUPFAM" id="SSF69572">
    <property type="entry name" value="Activating enzymes of the ubiquitin-like proteins"/>
    <property type="match status" value="1"/>
</dbReference>
<evidence type="ECO:0000250" key="1"/>
<evidence type="ECO:0000250" key="2">
    <source>
        <dbReference type="UniProtKB" id="Q13564"/>
    </source>
</evidence>
<evidence type="ECO:0000303" key="3">
    <source ref="1"/>
</evidence>
<evidence type="ECO:0000305" key="4"/>
<reference key="1">
    <citation type="submission" date="2003-08" db="EMBL/GenBank/DDBJ databases">
        <authorList>
            <consortium name="NIH - Zebrafish Gene Collection (ZGC) project"/>
        </authorList>
    </citation>
    <scope>NUCLEOTIDE SEQUENCE [LARGE SCALE MRNA] (ISOFORMS 1 AND 2)</scope>
    <source>
        <strain>SJD</strain>
        <tissue>Olfactory epithelium</tissue>
    </source>
</reference>